<keyword id="KW-0472">Membrane</keyword>
<keyword id="KW-1185">Reference proteome</keyword>
<keyword id="KW-0812">Transmembrane</keyword>
<keyword id="KW-1133">Transmembrane helix</keyword>
<protein>
    <recommendedName>
        <fullName>Small integral membrane protein 8</fullName>
    </recommendedName>
</protein>
<feature type="chain" id="PRO_0000089552" description="Small integral membrane protein 8">
    <location>
        <begin position="1"/>
        <end position="97"/>
    </location>
</feature>
<feature type="transmembrane region" description="Helical" evidence="1">
    <location>
        <begin position="48"/>
        <end position="67"/>
    </location>
</feature>
<feature type="region of interest" description="Disordered" evidence="2">
    <location>
        <begin position="1"/>
        <end position="24"/>
    </location>
</feature>
<feature type="compositionally biased region" description="Basic and acidic residues" evidence="2">
    <location>
        <begin position="9"/>
        <end position="20"/>
    </location>
</feature>
<gene>
    <name type="primary">SMIM8</name>
</gene>
<evidence type="ECO:0000255" key="1"/>
<evidence type="ECO:0000256" key="2">
    <source>
        <dbReference type="SAM" id="MobiDB-lite"/>
    </source>
</evidence>
<evidence type="ECO:0000305" key="3"/>
<dbReference type="EMBL" id="CR857334">
    <property type="protein sequence ID" value="CAH89630.1"/>
    <property type="molecule type" value="mRNA"/>
</dbReference>
<dbReference type="EMBL" id="CR857394">
    <property type="protein sequence ID" value="CAH89687.1"/>
    <property type="molecule type" value="mRNA"/>
</dbReference>
<dbReference type="RefSeq" id="NP_001124764.1">
    <property type="nucleotide sequence ID" value="NM_001131292.1"/>
</dbReference>
<dbReference type="RefSeq" id="XP_009240336.1">
    <property type="nucleotide sequence ID" value="XM_009242061.1"/>
</dbReference>
<dbReference type="RefSeq" id="XP_009240337.1">
    <property type="nucleotide sequence ID" value="XM_009242062.1"/>
</dbReference>
<dbReference type="FunCoup" id="Q5REX0">
    <property type="interactions" value="757"/>
</dbReference>
<dbReference type="STRING" id="9601.ENSPPYP00000018837"/>
<dbReference type="Ensembl" id="ENSPPYT00000019581.2">
    <property type="protein sequence ID" value="ENSPPYP00000018837.1"/>
    <property type="gene ID" value="ENSPPYG00000016825.2"/>
</dbReference>
<dbReference type="GeneID" id="100171615"/>
<dbReference type="KEGG" id="pon:100171615"/>
<dbReference type="CTD" id="57150"/>
<dbReference type="eggNOG" id="ENOG502S4X3">
    <property type="taxonomic scope" value="Eukaryota"/>
</dbReference>
<dbReference type="GeneTree" id="ENSGT00390000011674"/>
<dbReference type="HOGENOM" id="CLU_170028_0_0_1"/>
<dbReference type="InParanoid" id="Q5REX0"/>
<dbReference type="OMA" id="YMHATRE"/>
<dbReference type="OrthoDB" id="1880105at2759"/>
<dbReference type="TreeFam" id="TF323863"/>
<dbReference type="Proteomes" id="UP000001595">
    <property type="component" value="Chromosome 6"/>
</dbReference>
<dbReference type="GO" id="GO:0016020">
    <property type="term" value="C:membrane"/>
    <property type="evidence" value="ECO:0007669"/>
    <property type="project" value="UniProtKB-SubCell"/>
</dbReference>
<dbReference type="InterPro" id="IPR026686">
    <property type="entry name" value="UPF0708"/>
</dbReference>
<dbReference type="PANTHER" id="PTHR14274">
    <property type="entry name" value="SMALL INTEGRAL MEMBRANE PROTEIN 8"/>
    <property type="match status" value="1"/>
</dbReference>
<dbReference type="PANTHER" id="PTHR14274:SF1">
    <property type="entry name" value="SMALL INTEGRAL MEMBRANE PROTEIN 8"/>
    <property type="match status" value="1"/>
</dbReference>
<dbReference type="Pfam" id="PF14937">
    <property type="entry name" value="DUF4500"/>
    <property type="match status" value="1"/>
</dbReference>
<sequence>MSSAPEPPTFKKEPPKEKDFQSPGLRGVRTTTLFRAVNPELFIKPNKPVMAFGLVTLSLCVAYIGYLHATQENKKDLYEAIDSEGHSYMRRKTSKWD</sequence>
<accession>Q5REX0</accession>
<proteinExistence type="inferred from homology"/>
<name>SMIM8_PONAB</name>
<reference key="1">
    <citation type="submission" date="2004-11" db="EMBL/GenBank/DDBJ databases">
        <authorList>
            <consortium name="The German cDNA consortium"/>
        </authorList>
    </citation>
    <scope>NUCLEOTIDE SEQUENCE [LARGE SCALE MRNA]</scope>
    <source>
        <tissue>Brain cortex</tissue>
        <tissue>Kidney</tissue>
    </source>
</reference>
<organism>
    <name type="scientific">Pongo abelii</name>
    <name type="common">Sumatran orangutan</name>
    <name type="synonym">Pongo pygmaeus abelii</name>
    <dbReference type="NCBI Taxonomy" id="9601"/>
    <lineage>
        <taxon>Eukaryota</taxon>
        <taxon>Metazoa</taxon>
        <taxon>Chordata</taxon>
        <taxon>Craniata</taxon>
        <taxon>Vertebrata</taxon>
        <taxon>Euteleostomi</taxon>
        <taxon>Mammalia</taxon>
        <taxon>Eutheria</taxon>
        <taxon>Euarchontoglires</taxon>
        <taxon>Primates</taxon>
        <taxon>Haplorrhini</taxon>
        <taxon>Catarrhini</taxon>
        <taxon>Hominidae</taxon>
        <taxon>Pongo</taxon>
    </lineage>
</organism>
<comment type="subcellular location">
    <subcellularLocation>
        <location evidence="3">Membrane</location>
        <topology evidence="3">Single-pass membrane protein</topology>
    </subcellularLocation>
</comment>
<comment type="similarity">
    <text evidence="3">Belongs to the SMIM8 family.</text>
</comment>